<name>EPB41_XENLA</name>
<protein>
    <recommendedName>
        <fullName>Protein 4.1</fullName>
    </recommendedName>
    <alternativeName>
        <fullName>Band 4.1</fullName>
    </alternativeName>
    <alternativeName>
        <fullName evidence="1">Erythrocyte membrane protein band 4.1</fullName>
    </alternativeName>
</protein>
<dbReference type="EMBL" id="M20621">
    <property type="protein sequence ID" value="AAA49695.1"/>
    <property type="molecule type" value="mRNA"/>
</dbReference>
<dbReference type="PIR" id="A37353">
    <property type="entry name" value="A37353"/>
</dbReference>
<dbReference type="RefSeq" id="NP_001081264.1">
    <property type="nucleotide sequence ID" value="NM_001087795.1"/>
</dbReference>
<dbReference type="SMR" id="P11434"/>
<dbReference type="DNASU" id="397741"/>
<dbReference type="GeneID" id="397741"/>
<dbReference type="KEGG" id="xla:397741"/>
<dbReference type="AGR" id="Xenbase:XB-GENE-865471"/>
<dbReference type="CTD" id="397741"/>
<dbReference type="Xenbase" id="XB-GENE-865471">
    <property type="gene designation" value="epb41.L"/>
</dbReference>
<dbReference type="OrthoDB" id="6589456at2759"/>
<dbReference type="Proteomes" id="UP000186698">
    <property type="component" value="Chromosome 2L"/>
</dbReference>
<dbReference type="Bgee" id="397741">
    <property type="expression patterns" value="Expressed in lung and 19 other cell types or tissues"/>
</dbReference>
<dbReference type="GO" id="GO:0005938">
    <property type="term" value="C:cell cortex"/>
    <property type="evidence" value="ECO:0000250"/>
    <property type="project" value="UniProtKB"/>
</dbReference>
<dbReference type="GO" id="GO:0005856">
    <property type="term" value="C:cytoskeleton"/>
    <property type="evidence" value="ECO:0000318"/>
    <property type="project" value="GO_Central"/>
</dbReference>
<dbReference type="GO" id="GO:0005634">
    <property type="term" value="C:nucleus"/>
    <property type="evidence" value="ECO:0007669"/>
    <property type="project" value="UniProtKB-SubCell"/>
</dbReference>
<dbReference type="GO" id="GO:0005886">
    <property type="term" value="C:plasma membrane"/>
    <property type="evidence" value="ECO:0000318"/>
    <property type="project" value="GO_Central"/>
</dbReference>
<dbReference type="GO" id="GO:0003779">
    <property type="term" value="F:actin binding"/>
    <property type="evidence" value="ECO:0007669"/>
    <property type="project" value="UniProtKB-KW"/>
</dbReference>
<dbReference type="GO" id="GO:0005516">
    <property type="term" value="F:calmodulin binding"/>
    <property type="evidence" value="ECO:0007669"/>
    <property type="project" value="UniProtKB-KW"/>
</dbReference>
<dbReference type="GO" id="GO:0005198">
    <property type="term" value="F:structural molecule activity"/>
    <property type="evidence" value="ECO:0007669"/>
    <property type="project" value="InterPro"/>
</dbReference>
<dbReference type="GO" id="GO:0031032">
    <property type="term" value="P:actomyosin structure organization"/>
    <property type="evidence" value="ECO:0000318"/>
    <property type="project" value="GO_Central"/>
</dbReference>
<dbReference type="GO" id="GO:0051301">
    <property type="term" value="P:cell division"/>
    <property type="evidence" value="ECO:0007669"/>
    <property type="project" value="UniProtKB-KW"/>
</dbReference>
<dbReference type="GO" id="GO:0030866">
    <property type="term" value="P:cortical actin cytoskeleton organization"/>
    <property type="evidence" value="ECO:0007669"/>
    <property type="project" value="InterPro"/>
</dbReference>
<dbReference type="GO" id="GO:1904778">
    <property type="term" value="P:positive regulation of protein localization to cell cortex"/>
    <property type="evidence" value="ECO:0000250"/>
    <property type="project" value="UniProtKB"/>
</dbReference>
<dbReference type="CDD" id="cd14473">
    <property type="entry name" value="FERM_B-lobe"/>
    <property type="match status" value="1"/>
</dbReference>
<dbReference type="CDD" id="cd13184">
    <property type="entry name" value="FERM_C_4_1_family"/>
    <property type="match status" value="1"/>
</dbReference>
<dbReference type="CDD" id="cd17105">
    <property type="entry name" value="FERM_F1_EPB41"/>
    <property type="match status" value="1"/>
</dbReference>
<dbReference type="FunFam" id="1.20.80.10:FF:000001">
    <property type="entry name" value="Erythrocyte membrane protein band 4.1"/>
    <property type="match status" value="1"/>
</dbReference>
<dbReference type="FunFam" id="2.30.29.30:FF:000001">
    <property type="entry name" value="Erythrocyte membrane protein band 4.1"/>
    <property type="match status" value="1"/>
</dbReference>
<dbReference type="FunFam" id="3.10.20.90:FF:000002">
    <property type="entry name" value="Erythrocyte protein band 4.1-like 3"/>
    <property type="match status" value="1"/>
</dbReference>
<dbReference type="Gene3D" id="1.20.80.10">
    <property type="match status" value="1"/>
</dbReference>
<dbReference type="Gene3D" id="3.10.20.90">
    <property type="entry name" value="Phosphatidylinositol 3-kinase Catalytic Subunit, Chain A, domain 1"/>
    <property type="match status" value="1"/>
</dbReference>
<dbReference type="Gene3D" id="2.30.29.30">
    <property type="entry name" value="Pleckstrin-homology domain (PH domain)/Phosphotyrosine-binding domain (PTB)"/>
    <property type="match status" value="1"/>
</dbReference>
<dbReference type="InterPro" id="IPR008379">
    <property type="entry name" value="Band_4.1_C"/>
</dbReference>
<dbReference type="InterPro" id="IPR019749">
    <property type="entry name" value="Band_41_domain"/>
</dbReference>
<dbReference type="InterPro" id="IPR021187">
    <property type="entry name" value="EPB4.1_FERM_F1"/>
</dbReference>
<dbReference type="InterPro" id="IPR000798">
    <property type="entry name" value="Ez/rad/moesin-like"/>
</dbReference>
<dbReference type="InterPro" id="IPR014847">
    <property type="entry name" value="FA"/>
</dbReference>
<dbReference type="InterPro" id="IPR014352">
    <property type="entry name" value="FERM/acyl-CoA-bd_prot_sf"/>
</dbReference>
<dbReference type="InterPro" id="IPR035963">
    <property type="entry name" value="FERM_2"/>
</dbReference>
<dbReference type="InterPro" id="IPR019748">
    <property type="entry name" value="FERM_central"/>
</dbReference>
<dbReference type="InterPro" id="IPR019747">
    <property type="entry name" value="FERM_CS"/>
</dbReference>
<dbReference type="InterPro" id="IPR000299">
    <property type="entry name" value="FERM_domain"/>
</dbReference>
<dbReference type="InterPro" id="IPR018979">
    <property type="entry name" value="FERM_N"/>
</dbReference>
<dbReference type="InterPro" id="IPR018980">
    <property type="entry name" value="FERM_PH-like_C"/>
</dbReference>
<dbReference type="InterPro" id="IPR011993">
    <property type="entry name" value="PH-like_dom_sf"/>
</dbReference>
<dbReference type="InterPro" id="IPR007477">
    <property type="entry name" value="SAB_dom"/>
</dbReference>
<dbReference type="InterPro" id="IPR029071">
    <property type="entry name" value="Ubiquitin-like_domsf"/>
</dbReference>
<dbReference type="PANTHER" id="PTHR23280">
    <property type="entry name" value="4.1 G PROTEIN"/>
    <property type="match status" value="1"/>
</dbReference>
<dbReference type="PANTHER" id="PTHR23280:SF12">
    <property type="entry name" value="PROTEIN 4.1"/>
    <property type="match status" value="1"/>
</dbReference>
<dbReference type="Pfam" id="PF05902">
    <property type="entry name" value="4_1_CTD"/>
    <property type="match status" value="1"/>
</dbReference>
<dbReference type="Pfam" id="PF08736">
    <property type="entry name" value="FA"/>
    <property type="match status" value="1"/>
</dbReference>
<dbReference type="Pfam" id="PF09380">
    <property type="entry name" value="FERM_C"/>
    <property type="match status" value="1"/>
</dbReference>
<dbReference type="Pfam" id="PF00373">
    <property type="entry name" value="FERM_M"/>
    <property type="match status" value="1"/>
</dbReference>
<dbReference type="Pfam" id="PF09379">
    <property type="entry name" value="FERM_N"/>
    <property type="match status" value="1"/>
</dbReference>
<dbReference type="Pfam" id="PF04382">
    <property type="entry name" value="SAB"/>
    <property type="match status" value="1"/>
</dbReference>
<dbReference type="PIRSF" id="PIRSF002304">
    <property type="entry name" value="Membrane_skeletal_4_1"/>
    <property type="match status" value="1"/>
</dbReference>
<dbReference type="PRINTS" id="PR00935">
    <property type="entry name" value="BAND41"/>
</dbReference>
<dbReference type="PRINTS" id="PR00661">
    <property type="entry name" value="ERMFAMILY"/>
</dbReference>
<dbReference type="SMART" id="SM00295">
    <property type="entry name" value="B41"/>
    <property type="match status" value="1"/>
</dbReference>
<dbReference type="SMART" id="SM01195">
    <property type="entry name" value="FA"/>
    <property type="match status" value="1"/>
</dbReference>
<dbReference type="SMART" id="SM01196">
    <property type="entry name" value="FERM_C"/>
    <property type="match status" value="1"/>
</dbReference>
<dbReference type="SUPFAM" id="SSF50729">
    <property type="entry name" value="PH domain-like"/>
    <property type="match status" value="1"/>
</dbReference>
<dbReference type="SUPFAM" id="SSF47031">
    <property type="entry name" value="Second domain of FERM"/>
    <property type="match status" value="1"/>
</dbReference>
<dbReference type="SUPFAM" id="SSF54236">
    <property type="entry name" value="Ubiquitin-like"/>
    <property type="match status" value="1"/>
</dbReference>
<dbReference type="PROSITE" id="PS00660">
    <property type="entry name" value="FERM_1"/>
    <property type="match status" value="1"/>
</dbReference>
<dbReference type="PROSITE" id="PS00661">
    <property type="entry name" value="FERM_2"/>
    <property type="match status" value="1"/>
</dbReference>
<dbReference type="PROSITE" id="PS50057">
    <property type="entry name" value="FERM_3"/>
    <property type="match status" value="1"/>
</dbReference>
<accession>P11434</accession>
<sequence>MTTEKGLLAEAESPPQDQKQEGEEEVESCTTQPVVGSGDKDPETEQSQESPSTTSPSTRKSKDRHSQGKGLSRLFSSFLKRPKSQVSSDEKEVELLGEKGQDQKDVDEGLGEQLEDDVFLKAPIAAPEPELRTDPSLDLHSLSSAETQPAQEEQKEDQDPEADCEDVEGKEPIKKPEGESKASHKVVRRSPNMRCKVTLLDDTVYECDLEKHAKGQDIFKKVCSHLNIVEEDYFGLAIWESPTCKVWLDPLKDIRKQVHGGPCEFTSNVKFYPPDPAQLSEDITRYYLCLQLRKDIFSGRLPCSFATLALLGSYTVQSEVGDYEEDLHGVDYVSEFKLSPNQTKDLEEKVGELHKSYRSMTPAQADLEFLENAKKLTMYGVDIHQAKDLEGVDIKLGVCSGGLMVFKDNLRINRFPWPKVLKISYKRSSFFIKIRPGEQEQYESTIGFKLPSYKAAKKLWKVCVEHHTFFRLTSTESIPKHRFLSLGSTFRYSGRTQAQTRHASALIDRPAPHFVRTGSKRASRSLDGAAVATPEASRTHRPVSAPVFPPEFPAVQRKTPGPRVEEMPKKTEEKPKEGMPNQRESPKDVKATQQDSPSPTVNGDKVKDLEKTQDEIIRHHASIRELKKSFMESVPAPRPSEWDKRLSTHSPFRTLSFNGQVQTGTDGPPLVKTQTVTISNATNGEKGEIPTKEVPLVHTETKTITYEAARSDDVNTDQEPGILLTAHTITSETTSSTTTTQITKTVKGGISETLIEKRIVITGDGDLDHDQVLVQAIKEAKEQHPDMSVTKGVVHQETEIA</sequence>
<keyword id="KW-0009">Actin-binding</keyword>
<keyword id="KW-0112">Calmodulin-binding</keyword>
<keyword id="KW-0131">Cell cycle</keyword>
<keyword id="KW-0132">Cell division</keyword>
<keyword id="KW-0963">Cytoplasm</keyword>
<keyword id="KW-0206">Cytoskeleton</keyword>
<keyword id="KW-0498">Mitosis</keyword>
<keyword id="KW-0539">Nucleus</keyword>
<keyword id="KW-0597">Phosphoprotein</keyword>
<keyword id="KW-1185">Reference proteome</keyword>
<keyword id="KW-0813">Transport</keyword>
<gene>
    <name evidence="1" type="primary">epb41</name>
</gene>
<evidence type="ECO:0000250" key="1">
    <source>
        <dbReference type="UniProtKB" id="P11171"/>
    </source>
</evidence>
<evidence type="ECO:0000255" key="2">
    <source>
        <dbReference type="PROSITE-ProRule" id="PRU00084"/>
    </source>
</evidence>
<evidence type="ECO:0000256" key="3">
    <source>
        <dbReference type="SAM" id="MobiDB-lite"/>
    </source>
</evidence>
<comment type="function">
    <text evidence="1">Protein 4.1 is a major structural element of the erythrocyte membrane skeleton. It plays a key role in regulating membrane physical properties of mechanical stability and deformability by stabilizing spectrin-actin interaction. May be required for dynein-dynactin complex and NUMA1 recruitment at the mitotic cell cortex during anaphase.</text>
</comment>
<comment type="subunit">
    <text evidence="1">Binds with a high affinity to glycophorin and with lower affinity to band III protein. Associates with the nuclear mitotic apparatus. Binds calmodulin.</text>
</comment>
<comment type="subcellular location">
    <subcellularLocation>
        <location evidence="1">Nucleus</location>
    </subcellularLocation>
    <subcellularLocation>
        <location evidence="1">Cytoplasm</location>
        <location evidence="1">Cytoskeleton</location>
    </subcellularLocation>
    <subcellularLocation>
        <location evidence="1">Cytoplasm</location>
        <location evidence="1">Cell cortex</location>
    </subcellularLocation>
</comment>
<comment type="tissue specificity">
    <text>Found exclusively in photoreceptors following the terminal mitosis of retinal neurons. When retinal synaptogenesis is complete, protein 4.1 is also expressed in the inner retina. In adult amphibian retinas, protein 4.1 is detected in photoreceptors, bipolar cells, and ganglion cell axons.</text>
</comment>
<comment type="PTM">
    <text>Phosphorylated at multiple sites by different protein kinases and each phosphorylation event selectively modulates the protein's functions.</text>
</comment>
<feature type="chain" id="PRO_0000219393" description="Protein 4.1">
    <location>
        <begin position="1"/>
        <end position="801"/>
    </location>
</feature>
<feature type="domain" description="FERM" evidence="2">
    <location>
        <begin position="193"/>
        <end position="474"/>
    </location>
</feature>
<feature type="region of interest" description="Disordered" evidence="3">
    <location>
        <begin position="1"/>
        <end position="187"/>
    </location>
</feature>
<feature type="region of interest" description="Hydrophilic">
    <location>
        <begin position="477"/>
        <end position="587"/>
    </location>
</feature>
<feature type="region of interest" description="Disordered" evidence="3">
    <location>
        <begin position="516"/>
        <end position="613"/>
    </location>
</feature>
<feature type="region of interest" description="Spectrin--actin-binding">
    <location>
        <begin position="588"/>
        <end position="651"/>
    </location>
</feature>
<feature type="region of interest" description="C-terminal (CTD)">
    <location>
        <begin position="653"/>
        <end position="801"/>
    </location>
</feature>
<feature type="compositionally biased region" description="Low complexity" evidence="3">
    <location>
        <begin position="45"/>
        <end position="58"/>
    </location>
</feature>
<feature type="compositionally biased region" description="Basic and acidic residues" evidence="3">
    <location>
        <begin position="88"/>
        <end position="107"/>
    </location>
</feature>
<feature type="compositionally biased region" description="Acidic residues" evidence="3">
    <location>
        <begin position="108"/>
        <end position="117"/>
    </location>
</feature>
<feature type="compositionally biased region" description="Polar residues" evidence="3">
    <location>
        <begin position="141"/>
        <end position="151"/>
    </location>
</feature>
<feature type="compositionally biased region" description="Acidic residues" evidence="3">
    <location>
        <begin position="154"/>
        <end position="166"/>
    </location>
</feature>
<feature type="compositionally biased region" description="Basic and acidic residues" evidence="3">
    <location>
        <begin position="167"/>
        <end position="182"/>
    </location>
</feature>
<feature type="compositionally biased region" description="Basic and acidic residues" evidence="3">
    <location>
        <begin position="563"/>
        <end position="577"/>
    </location>
</feature>
<feature type="compositionally biased region" description="Polar residues" evidence="3">
    <location>
        <begin position="591"/>
        <end position="601"/>
    </location>
</feature>
<feature type="compositionally biased region" description="Basic and acidic residues" evidence="3">
    <location>
        <begin position="604"/>
        <end position="613"/>
    </location>
</feature>
<organism>
    <name type="scientific">Xenopus laevis</name>
    <name type="common">African clawed frog</name>
    <dbReference type="NCBI Taxonomy" id="8355"/>
    <lineage>
        <taxon>Eukaryota</taxon>
        <taxon>Metazoa</taxon>
        <taxon>Chordata</taxon>
        <taxon>Craniata</taxon>
        <taxon>Vertebrata</taxon>
        <taxon>Euteleostomi</taxon>
        <taxon>Amphibia</taxon>
        <taxon>Batrachia</taxon>
        <taxon>Anura</taxon>
        <taxon>Pipoidea</taxon>
        <taxon>Pipidae</taxon>
        <taxon>Xenopodinae</taxon>
        <taxon>Xenopus</taxon>
        <taxon>Xenopus</taxon>
    </lineage>
</organism>
<reference key="1">
    <citation type="journal article" date="1990" name="Dev. Biol.">
        <title>Membrane skeleton protein 4.1 in developing Xenopus: expression in postmitotic cells of the retina.</title>
        <authorList>
            <person name="Spencer M."/>
            <person name="Giebelhaus D.H."/>
            <person name="Kelly G.M."/>
            <person name="Bicknell J."/>
            <person name="Florio S.K."/>
            <person name="Bunt-Milam A."/>
            <person name="Moon R.T."/>
        </authorList>
    </citation>
    <scope>NUCLEOTIDE SEQUENCE [MRNA]</scope>
</reference>
<reference key="2">
    <citation type="journal article" date="1988" name="Cell">
        <title>Antisense RNA inhibits expression of membrane skeleton protein 4.1 during embryonic development of Xenopus.</title>
        <authorList>
            <person name="Giebelhaus D.H."/>
            <person name="Eib D.W."/>
            <person name="Moon R.T."/>
        </authorList>
    </citation>
    <scope>NUCLEOTIDE SEQUENCE [MRNA] OF 1-550</scope>
</reference>
<proteinExistence type="evidence at transcript level"/>